<reference key="1">
    <citation type="journal article" date="2006" name="Science">
        <title>Genomic islands and the ecology and evolution of Prochlorococcus.</title>
        <authorList>
            <person name="Coleman M.L."/>
            <person name="Sullivan M.B."/>
            <person name="Martiny A.C."/>
            <person name="Steglich C."/>
            <person name="Barry K."/>
            <person name="Delong E.F."/>
            <person name="Chisholm S.W."/>
        </authorList>
    </citation>
    <scope>NUCLEOTIDE SEQUENCE [LARGE SCALE GENOMIC DNA]</scope>
    <source>
        <strain>MIT 9312</strain>
    </source>
</reference>
<dbReference type="EMBL" id="CP000111">
    <property type="protein sequence ID" value="ABB50314.1"/>
    <property type="molecule type" value="Genomic_DNA"/>
</dbReference>
<dbReference type="RefSeq" id="WP_011376802.1">
    <property type="nucleotide sequence ID" value="NC_007577.1"/>
</dbReference>
<dbReference type="STRING" id="74546.PMT9312_1255"/>
<dbReference type="KEGG" id="pmi:PMT9312_1255"/>
<dbReference type="eggNOG" id="ENOG502Z7YX">
    <property type="taxonomic scope" value="Bacteria"/>
</dbReference>
<dbReference type="HOGENOM" id="CLU_095465_0_0_3"/>
<dbReference type="OrthoDB" id="7059574at2"/>
<dbReference type="Proteomes" id="UP000002715">
    <property type="component" value="Chromosome"/>
</dbReference>
<dbReference type="GO" id="GO:0009522">
    <property type="term" value="C:photosystem I"/>
    <property type="evidence" value="ECO:0007669"/>
    <property type="project" value="InterPro"/>
</dbReference>
<dbReference type="GO" id="GO:0031676">
    <property type="term" value="C:plasma membrane-derived thylakoid membrane"/>
    <property type="evidence" value="ECO:0007669"/>
    <property type="project" value="UniProtKB-SubCell"/>
</dbReference>
<dbReference type="GO" id="GO:0015979">
    <property type="term" value="P:photosynthesis"/>
    <property type="evidence" value="ECO:0007669"/>
    <property type="project" value="UniProtKB-UniRule"/>
</dbReference>
<dbReference type="HAMAP" id="MF_00437">
    <property type="entry name" value="Ycf4"/>
    <property type="match status" value="1"/>
</dbReference>
<dbReference type="InterPro" id="IPR003359">
    <property type="entry name" value="PSI_Ycf4_assembly"/>
</dbReference>
<dbReference type="NCBIfam" id="NF002712">
    <property type="entry name" value="PRK02542.1"/>
    <property type="match status" value="1"/>
</dbReference>
<dbReference type="Pfam" id="PF02392">
    <property type="entry name" value="Ycf4"/>
    <property type="match status" value="1"/>
</dbReference>
<protein>
    <recommendedName>
        <fullName evidence="1">Photosystem I assembly protein Ycf4</fullName>
    </recommendedName>
</protein>
<proteinExistence type="inferred from homology"/>
<keyword id="KW-0472">Membrane</keyword>
<keyword id="KW-0602">Photosynthesis</keyword>
<keyword id="KW-0793">Thylakoid</keyword>
<keyword id="KW-0812">Transmembrane</keyword>
<keyword id="KW-1133">Transmembrane helix</keyword>
<sequence>MNSDLTSFDKIEQKIGGSRKTSNYIIGGMLTIGGIGFLLASISSYTGKDLLPLGNPSTLLFIPQGIIMGAYGVVANLLNFYLWYMVYINFGSGSNSFNKSSKSVEIKRKGLFKDIDVKLNFDEIKSVKLDISEGFNPRRRIALVLKGRKKPLPLSGAGELKPLLQVEEEGARLAKFLNVNLEGLK</sequence>
<evidence type="ECO:0000255" key="1">
    <source>
        <dbReference type="HAMAP-Rule" id="MF_00437"/>
    </source>
</evidence>
<comment type="function">
    <text evidence="1">Seems to be required for the assembly of the photosystem I complex.</text>
</comment>
<comment type="subcellular location">
    <subcellularLocation>
        <location evidence="1">Cellular thylakoid membrane</location>
        <topology evidence="1">Multi-pass membrane protein</topology>
    </subcellularLocation>
</comment>
<comment type="similarity">
    <text evidence="1">Belongs to the Ycf4 family.</text>
</comment>
<organism>
    <name type="scientific">Prochlorococcus marinus (strain MIT 9312)</name>
    <dbReference type="NCBI Taxonomy" id="74546"/>
    <lineage>
        <taxon>Bacteria</taxon>
        <taxon>Bacillati</taxon>
        <taxon>Cyanobacteriota</taxon>
        <taxon>Cyanophyceae</taxon>
        <taxon>Synechococcales</taxon>
        <taxon>Prochlorococcaceae</taxon>
        <taxon>Prochlorococcus</taxon>
    </lineage>
</organism>
<accession>Q319Y1</accession>
<name>YCF4_PROM9</name>
<feature type="chain" id="PRO_1000025950" description="Photosystem I assembly protein Ycf4">
    <location>
        <begin position="1"/>
        <end position="185"/>
    </location>
</feature>
<feature type="transmembrane region" description="Helical" evidence="1">
    <location>
        <begin position="24"/>
        <end position="44"/>
    </location>
</feature>
<feature type="transmembrane region" description="Helical" evidence="1">
    <location>
        <begin position="66"/>
        <end position="86"/>
    </location>
</feature>
<gene>
    <name evidence="1" type="primary">ycf4</name>
    <name type="ordered locus">PMT9312_1255</name>
</gene>